<proteinExistence type="inferred from homology"/>
<accession>A7Z9Q0</accession>
<gene>
    <name evidence="1" type="primary">atpD</name>
    <name type="ordered locus">RBAM_033970</name>
</gene>
<feature type="chain" id="PRO_1000055094" description="ATP synthase subunit beta">
    <location>
        <begin position="1"/>
        <end position="473"/>
    </location>
</feature>
<feature type="binding site" evidence="1">
    <location>
        <begin position="158"/>
        <end position="165"/>
    </location>
    <ligand>
        <name>ATP</name>
        <dbReference type="ChEBI" id="CHEBI:30616"/>
    </ligand>
</feature>
<reference key="1">
    <citation type="journal article" date="2007" name="Nat. Biotechnol.">
        <title>Comparative analysis of the complete genome sequence of the plant growth-promoting bacterium Bacillus amyloliquefaciens FZB42.</title>
        <authorList>
            <person name="Chen X.H."/>
            <person name="Koumoutsi A."/>
            <person name="Scholz R."/>
            <person name="Eisenreich A."/>
            <person name="Schneider K."/>
            <person name="Heinemeyer I."/>
            <person name="Morgenstern B."/>
            <person name="Voss B."/>
            <person name="Hess W.R."/>
            <person name="Reva O."/>
            <person name="Junge H."/>
            <person name="Voigt B."/>
            <person name="Jungblut P.R."/>
            <person name="Vater J."/>
            <person name="Suessmuth R."/>
            <person name="Liesegang H."/>
            <person name="Strittmatter A."/>
            <person name="Gottschalk G."/>
            <person name="Borriss R."/>
        </authorList>
    </citation>
    <scope>NUCLEOTIDE SEQUENCE [LARGE SCALE GENOMIC DNA]</scope>
    <source>
        <strain>DSM 23117 / BGSC 10A6 / LMG 26770 / FZB42</strain>
    </source>
</reference>
<protein>
    <recommendedName>
        <fullName evidence="1">ATP synthase subunit beta</fullName>
        <ecNumber evidence="1">7.1.2.2</ecNumber>
    </recommendedName>
    <alternativeName>
        <fullName evidence="1">ATP synthase F1 sector subunit beta</fullName>
    </alternativeName>
    <alternativeName>
        <fullName evidence="1">F-ATPase subunit beta</fullName>
    </alternativeName>
</protein>
<organism>
    <name type="scientific">Bacillus velezensis (strain DSM 23117 / BGSC 10A6 / LMG 26770 / FZB42)</name>
    <name type="common">Bacillus amyloliquefaciens subsp. plantarum</name>
    <dbReference type="NCBI Taxonomy" id="326423"/>
    <lineage>
        <taxon>Bacteria</taxon>
        <taxon>Bacillati</taxon>
        <taxon>Bacillota</taxon>
        <taxon>Bacilli</taxon>
        <taxon>Bacillales</taxon>
        <taxon>Bacillaceae</taxon>
        <taxon>Bacillus</taxon>
        <taxon>Bacillus amyloliquefaciens group</taxon>
    </lineage>
</organism>
<dbReference type="EC" id="7.1.2.2" evidence="1"/>
<dbReference type="EMBL" id="CP000560">
    <property type="protein sequence ID" value="ABS75726.1"/>
    <property type="molecule type" value="Genomic_DNA"/>
</dbReference>
<dbReference type="RefSeq" id="WP_003151173.1">
    <property type="nucleotide sequence ID" value="NC_009725.2"/>
</dbReference>
<dbReference type="SMR" id="A7Z9Q0"/>
<dbReference type="GeneID" id="93082541"/>
<dbReference type="KEGG" id="bay:RBAM_033970"/>
<dbReference type="HOGENOM" id="CLU_022398_0_2_9"/>
<dbReference type="Proteomes" id="UP000001120">
    <property type="component" value="Chromosome"/>
</dbReference>
<dbReference type="GO" id="GO:0005886">
    <property type="term" value="C:plasma membrane"/>
    <property type="evidence" value="ECO:0007669"/>
    <property type="project" value="UniProtKB-SubCell"/>
</dbReference>
<dbReference type="GO" id="GO:0045259">
    <property type="term" value="C:proton-transporting ATP synthase complex"/>
    <property type="evidence" value="ECO:0007669"/>
    <property type="project" value="UniProtKB-KW"/>
</dbReference>
<dbReference type="GO" id="GO:0005524">
    <property type="term" value="F:ATP binding"/>
    <property type="evidence" value="ECO:0007669"/>
    <property type="project" value="UniProtKB-UniRule"/>
</dbReference>
<dbReference type="GO" id="GO:0016887">
    <property type="term" value="F:ATP hydrolysis activity"/>
    <property type="evidence" value="ECO:0007669"/>
    <property type="project" value="InterPro"/>
</dbReference>
<dbReference type="GO" id="GO:0046933">
    <property type="term" value="F:proton-transporting ATP synthase activity, rotational mechanism"/>
    <property type="evidence" value="ECO:0007669"/>
    <property type="project" value="UniProtKB-UniRule"/>
</dbReference>
<dbReference type="CDD" id="cd18110">
    <property type="entry name" value="ATP-synt_F1_beta_C"/>
    <property type="match status" value="1"/>
</dbReference>
<dbReference type="CDD" id="cd18115">
    <property type="entry name" value="ATP-synt_F1_beta_N"/>
    <property type="match status" value="1"/>
</dbReference>
<dbReference type="CDD" id="cd01133">
    <property type="entry name" value="F1-ATPase_beta_CD"/>
    <property type="match status" value="1"/>
</dbReference>
<dbReference type="FunFam" id="1.10.1140.10:FF:000001">
    <property type="entry name" value="ATP synthase subunit beta"/>
    <property type="match status" value="1"/>
</dbReference>
<dbReference type="FunFam" id="2.40.10.170:FF:000005">
    <property type="entry name" value="ATP synthase subunit beta"/>
    <property type="match status" value="1"/>
</dbReference>
<dbReference type="FunFam" id="3.40.50.300:FF:000004">
    <property type="entry name" value="ATP synthase subunit beta"/>
    <property type="match status" value="1"/>
</dbReference>
<dbReference type="Gene3D" id="2.40.10.170">
    <property type="match status" value="1"/>
</dbReference>
<dbReference type="Gene3D" id="1.10.1140.10">
    <property type="entry name" value="Bovine Mitochondrial F1-atpase, Atp Synthase Beta Chain, Chain D, domain 3"/>
    <property type="match status" value="1"/>
</dbReference>
<dbReference type="Gene3D" id="3.40.50.300">
    <property type="entry name" value="P-loop containing nucleotide triphosphate hydrolases"/>
    <property type="match status" value="1"/>
</dbReference>
<dbReference type="HAMAP" id="MF_01347">
    <property type="entry name" value="ATP_synth_beta_bact"/>
    <property type="match status" value="1"/>
</dbReference>
<dbReference type="InterPro" id="IPR003593">
    <property type="entry name" value="AAA+_ATPase"/>
</dbReference>
<dbReference type="InterPro" id="IPR055190">
    <property type="entry name" value="ATP-synt_VA_C"/>
</dbReference>
<dbReference type="InterPro" id="IPR005722">
    <property type="entry name" value="ATP_synth_F1_bsu"/>
</dbReference>
<dbReference type="InterPro" id="IPR020003">
    <property type="entry name" value="ATPase_a/bsu_AS"/>
</dbReference>
<dbReference type="InterPro" id="IPR050053">
    <property type="entry name" value="ATPase_alpha/beta_chains"/>
</dbReference>
<dbReference type="InterPro" id="IPR004100">
    <property type="entry name" value="ATPase_F1/V1/A1_a/bsu_N"/>
</dbReference>
<dbReference type="InterPro" id="IPR036121">
    <property type="entry name" value="ATPase_F1/V1/A1_a/bsu_N_sf"/>
</dbReference>
<dbReference type="InterPro" id="IPR000194">
    <property type="entry name" value="ATPase_F1/V1/A1_a/bsu_nucl-bd"/>
</dbReference>
<dbReference type="InterPro" id="IPR024034">
    <property type="entry name" value="ATPase_F1/V1_b/a_C"/>
</dbReference>
<dbReference type="InterPro" id="IPR027417">
    <property type="entry name" value="P-loop_NTPase"/>
</dbReference>
<dbReference type="NCBIfam" id="TIGR01039">
    <property type="entry name" value="atpD"/>
    <property type="match status" value="1"/>
</dbReference>
<dbReference type="PANTHER" id="PTHR15184">
    <property type="entry name" value="ATP SYNTHASE"/>
    <property type="match status" value="1"/>
</dbReference>
<dbReference type="PANTHER" id="PTHR15184:SF71">
    <property type="entry name" value="ATP SYNTHASE SUBUNIT BETA, MITOCHONDRIAL"/>
    <property type="match status" value="1"/>
</dbReference>
<dbReference type="Pfam" id="PF00006">
    <property type="entry name" value="ATP-synt_ab"/>
    <property type="match status" value="1"/>
</dbReference>
<dbReference type="Pfam" id="PF02874">
    <property type="entry name" value="ATP-synt_ab_N"/>
    <property type="match status" value="1"/>
</dbReference>
<dbReference type="Pfam" id="PF22919">
    <property type="entry name" value="ATP-synt_VA_C"/>
    <property type="match status" value="1"/>
</dbReference>
<dbReference type="SMART" id="SM00382">
    <property type="entry name" value="AAA"/>
    <property type="match status" value="1"/>
</dbReference>
<dbReference type="SUPFAM" id="SSF47917">
    <property type="entry name" value="C-terminal domain of alpha and beta subunits of F1 ATP synthase"/>
    <property type="match status" value="1"/>
</dbReference>
<dbReference type="SUPFAM" id="SSF50615">
    <property type="entry name" value="N-terminal domain of alpha and beta subunits of F1 ATP synthase"/>
    <property type="match status" value="1"/>
</dbReference>
<dbReference type="SUPFAM" id="SSF52540">
    <property type="entry name" value="P-loop containing nucleoside triphosphate hydrolases"/>
    <property type="match status" value="1"/>
</dbReference>
<dbReference type="PROSITE" id="PS00152">
    <property type="entry name" value="ATPASE_ALPHA_BETA"/>
    <property type="match status" value="1"/>
</dbReference>
<evidence type="ECO:0000255" key="1">
    <source>
        <dbReference type="HAMAP-Rule" id="MF_01347"/>
    </source>
</evidence>
<comment type="function">
    <text evidence="1">Produces ATP from ADP in the presence of a proton gradient across the membrane. The catalytic sites are hosted primarily by the beta subunits.</text>
</comment>
<comment type="catalytic activity">
    <reaction evidence="1">
        <text>ATP + H2O + 4 H(+)(in) = ADP + phosphate + 5 H(+)(out)</text>
        <dbReference type="Rhea" id="RHEA:57720"/>
        <dbReference type="ChEBI" id="CHEBI:15377"/>
        <dbReference type="ChEBI" id="CHEBI:15378"/>
        <dbReference type="ChEBI" id="CHEBI:30616"/>
        <dbReference type="ChEBI" id="CHEBI:43474"/>
        <dbReference type="ChEBI" id="CHEBI:456216"/>
        <dbReference type="EC" id="7.1.2.2"/>
    </reaction>
</comment>
<comment type="subunit">
    <text evidence="1">F-type ATPases have 2 components, CF(1) - the catalytic core - and CF(0) - the membrane proton channel. CF(1) has five subunits: alpha(3), beta(3), gamma(1), delta(1), epsilon(1). CF(0) has three main subunits: a(1), b(2) and c(9-12). The alpha and beta chains form an alternating ring which encloses part of the gamma chain. CF(1) is attached to CF(0) by a central stalk formed by the gamma and epsilon chains, while a peripheral stalk is formed by the delta and b chains.</text>
</comment>
<comment type="subcellular location">
    <subcellularLocation>
        <location evidence="1">Cell membrane</location>
        <topology evidence="1">Peripheral membrane protein</topology>
    </subcellularLocation>
</comment>
<comment type="similarity">
    <text evidence="1">Belongs to the ATPase alpha/beta chains family.</text>
</comment>
<keyword id="KW-0066">ATP synthesis</keyword>
<keyword id="KW-0067">ATP-binding</keyword>
<keyword id="KW-1003">Cell membrane</keyword>
<keyword id="KW-0139">CF(1)</keyword>
<keyword id="KW-0375">Hydrogen ion transport</keyword>
<keyword id="KW-0406">Ion transport</keyword>
<keyword id="KW-0472">Membrane</keyword>
<keyword id="KW-0547">Nucleotide-binding</keyword>
<keyword id="KW-1278">Translocase</keyword>
<keyword id="KW-0813">Transport</keyword>
<name>ATPB_BACVZ</name>
<sequence>MKKGRVSQVLGPVVDVRFEDGHLPAIYNAIKVSQPATGENEVGIDLTLEVALHLGDDTVRTIAMASTDGIQRGMEAVDTGAPISVPVGDVTLGRVFNVLGDKIDLNEPLPADAQKDPIHRSAPSFDELSTEVEILETGIKVVDLLAPYIKGGKIGLFGGAGVGKTVLIQELINNIAQEHGGISVFAGVGERTREGNDLFYEMSDSGVIKKTAMVFGQMNEPPGARMRVALTGLTMAEHFRDKQGQDVLFFIDNIFRFTQAGSEVSALLGRMPSAVGYQPTLATEMGQLQERITSTNVGSVTSIQAIYVPADDYTDPAPATTFAHLDATTNLERKLTEMGIYPAVDPLASTSRALAPEIVGEEHYAVAREVQSTLQRYKELQDIIAILGMDELGEEDKLVVHRARRIQFFLSQNFHVAEQFTGQKGSYVPVKETVRGFKEILSGKYDHLPEDAFRLVGRIEEVIENAKEMGVEV</sequence>